<comment type="function">
    <text evidence="3 4 5 6 10 11">Acetyltransferase; part of the gene cluster that mediates the biosynthesis of sirodesmin PL, an epipolythiodioxopiperazine (ETP) characterized by a disulfide bridged cyclic dipeptide and that acts as a phytotoxin which is involved in the blackleg didease of canola (PubMed:15387811, PubMed:18272357, PubMed:19762440). SirD catalyzes the O-prenylation of L-tyrosine (L-Tyr) in the presence of dimethylallyl diphosphate (DMAPP) to yield 4-O-dimethylallyl-L-Tyr, and therefore represents probably the first pathway-specific enzyme in the biosynthesis of sirodesmin PL (PubMed:19762440, PubMed:21038099, PubMed:24083562). 4-O-dimethylallyl-L-Tyr, then undergoes condensation with L-Ser in a reaction catalyzed by the non-ribosomal peptide synthase sirP to form the diketopiperazine (DKP) backbone (PubMed:18272357). Further bishydroxylation of the DKP performed by the cytochrome P450 monooxygenase sirC leads to the production of the intermediate phomamide (PubMed:27390873). This step is essential to form the reactive thiol group required for toxicity of sirodesmin PL (PubMed:27390873). The next steps of sirodesmin biosynthesis are not well understood yet, but some predictions could be made from intermediate compounds identification (PubMed:18272357). Phomamide is converted into phomalizarine via oxidation, probably by sirT (PubMed:18272357). Further oxidation, methylation (by sirM or sirN) and reduction steps convert phomalizarine to deacetyl sirodesmin (PubMed:18272357). Finally, acetyltransferase sirH probably acetylates deacetyl sirodesmin to produce sirodesmin PL (PubMed:18272357).</text>
</comment>
<comment type="pathway">
    <text evidence="10">Mycotoxin biosynthesis.</text>
</comment>
<comment type="subcellular location">
    <subcellularLocation>
        <location evidence="1">Membrane</location>
        <topology evidence="1">Multi-pass membrane protein</topology>
    </subcellularLocation>
</comment>
<comment type="induction">
    <text evidence="2">Expression is co-regulated with the other genes from the sirodesmin cluster and corresponds with sirodesmin production (PubMed:15387811).</text>
</comment>
<comment type="similarity">
    <text evidence="9">Belongs to the wax synthase family.</text>
</comment>
<protein>
    <recommendedName>
        <fullName evidence="8">Acetyltransferase sirH</fullName>
        <ecNumber evidence="11">2.3.1.-</ecNumber>
    </recommendedName>
    <alternativeName>
        <fullName evidence="7">Sirodesmin biosynthesis protein H</fullName>
    </alternativeName>
</protein>
<dbReference type="EC" id="2.3.1.-" evidence="11"/>
<dbReference type="EMBL" id="AY553235">
    <property type="protein sequence ID" value="AAS92539.1"/>
    <property type="molecule type" value="Genomic_DNA"/>
</dbReference>
<dbReference type="GO" id="GO:0016020">
    <property type="term" value="C:membrane"/>
    <property type="evidence" value="ECO:0007669"/>
    <property type="project" value="UniProtKB-SubCell"/>
</dbReference>
<dbReference type="GO" id="GO:0016746">
    <property type="term" value="F:acyltransferase activity"/>
    <property type="evidence" value="ECO:0007669"/>
    <property type="project" value="UniProtKB-KW"/>
</dbReference>
<dbReference type="InterPro" id="IPR032805">
    <property type="entry name" value="Wax_synthase_dom"/>
</dbReference>
<dbReference type="Pfam" id="PF13813">
    <property type="entry name" value="MBOAT_2"/>
    <property type="match status" value="1"/>
</dbReference>
<name>SIRH_LEPMC</name>
<accession>Q6Q889</accession>
<feature type="chain" id="PRO_0000437735" description="Acetyltransferase sirH">
    <location>
        <begin position="1"/>
        <end position="406"/>
    </location>
</feature>
<feature type="transmembrane region" description="Helical" evidence="1">
    <location>
        <begin position="9"/>
        <end position="29"/>
    </location>
</feature>
<feature type="transmembrane region" description="Helical" evidence="1">
    <location>
        <begin position="32"/>
        <end position="52"/>
    </location>
</feature>
<feature type="transmembrane region" description="Helical" evidence="1">
    <location>
        <begin position="63"/>
        <end position="83"/>
    </location>
</feature>
<feature type="transmembrane region" description="Helical" evidence="1">
    <location>
        <begin position="295"/>
        <end position="315"/>
    </location>
</feature>
<feature type="transmembrane region" description="Helical" evidence="1">
    <location>
        <begin position="323"/>
        <end position="343"/>
    </location>
</feature>
<feature type="transmembrane region" description="Helical" evidence="1">
    <location>
        <begin position="358"/>
        <end position="378"/>
    </location>
</feature>
<keyword id="KW-0012">Acyltransferase</keyword>
<keyword id="KW-0472">Membrane</keyword>
<keyword id="KW-0808">Transferase</keyword>
<keyword id="KW-0812">Transmembrane</keyword>
<keyword id="KW-1133">Transmembrane helix</keyword>
<keyword id="KW-0843">Virulence</keyword>
<gene>
    <name evidence="7" type="primary">sirH</name>
</gene>
<reference key="1">
    <citation type="journal article" date="2004" name="Mol. Microbiol.">
        <title>The sirodesmin biosynthetic gene cluster of the plant pathogenic fungus Leptosphaeria maculans.</title>
        <authorList>
            <person name="Gardiner D.M."/>
            <person name="Cozijnsen A.J."/>
            <person name="Wilson L.M."/>
            <person name="Pedras M.S."/>
            <person name="Howlett B.J."/>
        </authorList>
    </citation>
    <scope>NUCLEOTIDE SEQUENCE [GENOMIC DNA]</scope>
    <scope>FUNCTION</scope>
    <scope>INDUCTION</scope>
</reference>
<reference key="2">
    <citation type="journal article" date="2008" name="Mycol. Res.">
        <title>Biosynthetic gene clusters for epipolythiodioxopiperazines in filamentous fungi.</title>
        <authorList>
            <person name="Fox E.M."/>
            <person name="Howlett B.J."/>
        </authorList>
    </citation>
    <scope>FUNCTION</scope>
</reference>
<reference key="3">
    <citation type="journal article" date="2010" name="Microbiology">
        <title>A tyrosine O-prenyltransferase catalyses the first pathway-specific step in the biosynthesis of sirodesmin PL.</title>
        <authorList>
            <person name="Kremer A."/>
            <person name="Li S.M."/>
        </authorList>
    </citation>
    <scope>FUNCTION</scope>
</reference>
<reference key="4">
    <citation type="journal article" date="2011" name="Appl. Microbiol. Biotechnol.">
        <title>The tyrosine O-prenyltransferase SirD catalyzes O-, N-, and C-prenylations.</title>
        <authorList>
            <person name="Zou H.X."/>
            <person name="Xie X."/>
            <person name="Zheng X.D."/>
            <person name="Li S.M."/>
        </authorList>
    </citation>
    <scope>FUNCTION</scope>
</reference>
<reference key="5">
    <citation type="journal article" date="2013" name="ACS Chem. Biol.">
        <title>Tyrosine O-prenyltransferase SirD catalyzes S-, C-, and N-prenylations on tyrosine and tryptophan derivatives.</title>
        <authorList>
            <person name="Rudolf J.D."/>
            <person name="Poulter C.D."/>
        </authorList>
    </citation>
    <scope>FUNCTION</scope>
</reference>
<reference key="6">
    <citation type="journal article" date="2016" name="PLoS ONE">
        <title>The epipolythiodiketopiperazine gene cluster in Claviceps purpurea: dysfunctional cytochrome P450 enzyme prevents formation of the previously unknown clapurines.</title>
        <authorList>
            <person name="Dopstadt J."/>
            <person name="Neubauer L."/>
            <person name="Tudzynski P."/>
            <person name="Humpf H.U."/>
        </authorList>
    </citation>
    <scope>FUNCTION</scope>
</reference>
<proteinExistence type="evidence at transcript level"/>
<evidence type="ECO:0000255" key="1"/>
<evidence type="ECO:0000269" key="2">
    <source>
    </source>
</evidence>
<evidence type="ECO:0000269" key="3">
    <source>
    </source>
</evidence>
<evidence type="ECO:0000269" key="4">
    <source>
    </source>
</evidence>
<evidence type="ECO:0000269" key="5">
    <source>
    </source>
</evidence>
<evidence type="ECO:0000269" key="6">
    <source>
    </source>
</evidence>
<evidence type="ECO:0000303" key="7">
    <source>
    </source>
</evidence>
<evidence type="ECO:0000303" key="8">
    <source>
    </source>
</evidence>
<evidence type="ECO:0000305" key="9"/>
<evidence type="ECO:0000305" key="10">
    <source>
    </source>
</evidence>
<evidence type="ECO:0000305" key="11">
    <source>
    </source>
</evidence>
<organism>
    <name type="scientific">Leptosphaeria maculans</name>
    <name type="common">Blackleg fungus</name>
    <name type="synonym">Phoma lingam</name>
    <dbReference type="NCBI Taxonomy" id="5022"/>
    <lineage>
        <taxon>Eukaryota</taxon>
        <taxon>Fungi</taxon>
        <taxon>Dikarya</taxon>
        <taxon>Ascomycota</taxon>
        <taxon>Pezizomycotina</taxon>
        <taxon>Dothideomycetes</taxon>
        <taxon>Pleosporomycetidae</taxon>
        <taxon>Pleosporales</taxon>
        <taxon>Pleosporineae</taxon>
        <taxon>Leptosphaeriaceae</taxon>
        <taxon>Plenodomus</taxon>
        <taxon>Plenodomus lingam/Leptosphaeria maculans species complex</taxon>
    </lineage>
</organism>
<sequence>MVSAKLPSIFIEAQLPLIYANIILAFALGPQAHTFRVCLTLPILLFLVCQSLYREQNGPWEDLLSNNSLVMFTVFVYIDWILLQSPDREQWHKLNNAKTESNGPTKAKESGPPHGFFQRIWFGCRIATAWRYIGWSCQVKNVPMEHSAGYPRRYFIARKSLRALAFYLMKETLEVYTASTPHGGWWDTQNTKPALSIKNVPLWHQFKYTWVHIFLAYATLEMANSILGVVSVILHLATPQECPSAFGDLEDFFTVRKAWSTVWHQHMRRLTSTMGLFVARDLMQLRKGSFQSKYVQLFVGFGVSAGLHAGVALLCSKALNDDSALFFFGIQAPIIMLEDHVIAKGKSLGFKDSPLWRFIGFVWTTLAIGFTCRAWVGSMIDNGMWVHARKKDSVIQGLLINAIQQP</sequence>